<keyword id="KW-0175">Coiled coil</keyword>
<keyword id="KW-1185">Reference proteome</keyword>
<sequence>MASNILQIPFRRSHTVSLSTALTQYISTKYDQRPDMFADDLLIIDRLRNEAINVQEPHVSGISRLVTYAAQLKWLGGKFPVDVGVEFPWYPAFGFNTSRPVSQDNIRFELANVIFNLAALYSQLAFAVNRTTTDGLKQACNYFCQAAGILAHLRTDIVPDMRSAPPEDMDEMTLRSLEELLLAQAQECFWQKAVMDGLKDASIARLAGQVSDFYGDACDHAVKSNAISPEWIHHMTAKQHHFAAAAQYRQSLDCLEKRKYGEEVARLRDAVACVNEALKESRWINRTVLGDLQGLKNRVTEDLKRAEKDNDMIYLNPVPPKSELKLIDRACMVAAKAPSQVTDAISMLGEKGPLGQPLFSKLVPYAVHIAASIYSDRRDRLVNERIIGELENMTDKLRDLLSSLNLPGSLQALEKPLGLPPSLVAHAEEMRQQDGLNRLRKSLLDIAKVKSNDRAVYTEGVELLAAEKAEDDASRRKFGTDRWTREASEAAAPKLYTTAREIDGYFTSAQSSDNLVEQKLHDSEAVFRVLTGTNRDLEAFVPSSRRATIPPEVEREVSRLRSCISEVNRLESRRKRKAQAVKDKARADDISSALVREAARLEREFPMQAIQASQFEDLFESRLRDYDVDLDMVAQEMHDQDQIVAQVRDANRAFTRAHTGDASTKEREKALQELENGYLKYKEIISNIEVGRKFYNDLAKIVGRFRDDVKAFVHKRRMEASQLEQDISSVAAMASLNISPIRQPPQQTVVSAPVSVSAAASVPAPTHFNPVKPQPQPPSQAIPPQSQPQPQPQPLRTPLTAPQPTRSVPQVTPGMWSPEMGIRFGPGGTTAQQSQQTWDPSKGMKFS</sequence>
<protein>
    <recommendedName>
        <fullName>pH-response regulator protein palA/RIM20</fullName>
    </recommendedName>
</protein>
<accession>P79020</accession>
<accession>C8V8Z2</accession>
<accession>Q5B529</accession>
<reference key="1">
    <citation type="journal article" date="1997" name="J. Bacteriol.">
        <title>Characterisation of the pH signal transduction pathway gene palA of Aspergillus nidulans and identification of possible homologues.</title>
        <authorList>
            <person name="Negrete-Urtasun S."/>
            <person name="Denison S.H."/>
            <person name="Arst H.N. Jr."/>
        </authorList>
    </citation>
    <scope>NUCLEOTIDE SEQUENCE [GENOMIC DNA]</scope>
    <source>
        <strain>FGSC A4 / ATCC 38163 / CBS 112.46 / NRRL 194 / M139</strain>
    </source>
</reference>
<reference key="2">
    <citation type="journal article" date="2005" name="Nature">
        <title>Sequencing of Aspergillus nidulans and comparative analysis with A. fumigatus and A. oryzae.</title>
        <authorList>
            <person name="Galagan J.E."/>
            <person name="Calvo S.E."/>
            <person name="Cuomo C."/>
            <person name="Ma L.-J."/>
            <person name="Wortman J.R."/>
            <person name="Batzoglou S."/>
            <person name="Lee S.-I."/>
            <person name="Bastuerkmen M."/>
            <person name="Spevak C.C."/>
            <person name="Clutterbuck J."/>
            <person name="Kapitonov V."/>
            <person name="Jurka J."/>
            <person name="Scazzocchio C."/>
            <person name="Farman M.L."/>
            <person name="Butler J."/>
            <person name="Purcell S."/>
            <person name="Harris S."/>
            <person name="Braus G.H."/>
            <person name="Draht O."/>
            <person name="Busch S."/>
            <person name="D'Enfert C."/>
            <person name="Bouchier C."/>
            <person name="Goldman G.H."/>
            <person name="Bell-Pedersen D."/>
            <person name="Griffiths-Jones S."/>
            <person name="Doonan J.H."/>
            <person name="Yu J."/>
            <person name="Vienken K."/>
            <person name="Pain A."/>
            <person name="Freitag M."/>
            <person name="Selker E.U."/>
            <person name="Archer D.B."/>
            <person name="Penalva M.A."/>
            <person name="Oakley B.R."/>
            <person name="Momany M."/>
            <person name="Tanaka T."/>
            <person name="Kumagai T."/>
            <person name="Asai K."/>
            <person name="Machida M."/>
            <person name="Nierman W.C."/>
            <person name="Denning D.W."/>
            <person name="Caddick M.X."/>
            <person name="Hynes M."/>
            <person name="Paoletti M."/>
            <person name="Fischer R."/>
            <person name="Miller B.L."/>
            <person name="Dyer P.S."/>
            <person name="Sachs M.S."/>
            <person name="Osmani S.A."/>
            <person name="Birren B.W."/>
        </authorList>
    </citation>
    <scope>NUCLEOTIDE SEQUENCE [LARGE SCALE GENOMIC DNA]</scope>
    <source>
        <strain>FGSC A4 / ATCC 38163 / CBS 112.46 / NRRL 194 / M139</strain>
    </source>
</reference>
<reference key="3">
    <citation type="journal article" date="2009" name="Fungal Genet. Biol.">
        <title>The 2008 update of the Aspergillus nidulans genome annotation: a community effort.</title>
        <authorList>
            <person name="Wortman J.R."/>
            <person name="Gilsenan J.M."/>
            <person name="Joardar V."/>
            <person name="Deegan J."/>
            <person name="Clutterbuck J."/>
            <person name="Andersen M.R."/>
            <person name="Archer D."/>
            <person name="Bencina M."/>
            <person name="Braus G."/>
            <person name="Coutinho P."/>
            <person name="von Dohren H."/>
            <person name="Doonan J."/>
            <person name="Driessen A.J."/>
            <person name="Durek P."/>
            <person name="Espeso E."/>
            <person name="Fekete E."/>
            <person name="Flipphi M."/>
            <person name="Estrada C.G."/>
            <person name="Geysens S."/>
            <person name="Goldman G."/>
            <person name="de Groot P.W."/>
            <person name="Hansen K."/>
            <person name="Harris S.D."/>
            <person name="Heinekamp T."/>
            <person name="Helmstaedt K."/>
            <person name="Henrissat B."/>
            <person name="Hofmann G."/>
            <person name="Homan T."/>
            <person name="Horio T."/>
            <person name="Horiuchi H."/>
            <person name="James S."/>
            <person name="Jones M."/>
            <person name="Karaffa L."/>
            <person name="Karanyi Z."/>
            <person name="Kato M."/>
            <person name="Keller N."/>
            <person name="Kelly D.E."/>
            <person name="Kiel J.A."/>
            <person name="Kim J.M."/>
            <person name="van der Klei I.J."/>
            <person name="Klis F.M."/>
            <person name="Kovalchuk A."/>
            <person name="Krasevec N."/>
            <person name="Kubicek C.P."/>
            <person name="Liu B."/>
            <person name="Maccabe A."/>
            <person name="Meyer V."/>
            <person name="Mirabito P."/>
            <person name="Miskei M."/>
            <person name="Mos M."/>
            <person name="Mullins J."/>
            <person name="Nelson D.R."/>
            <person name="Nielsen J."/>
            <person name="Oakley B.R."/>
            <person name="Osmani S.A."/>
            <person name="Pakula T."/>
            <person name="Paszewski A."/>
            <person name="Paulsen I."/>
            <person name="Pilsyk S."/>
            <person name="Pocsi I."/>
            <person name="Punt P.J."/>
            <person name="Ram A.F."/>
            <person name="Ren Q."/>
            <person name="Robellet X."/>
            <person name="Robson G."/>
            <person name="Seiboth B."/>
            <person name="van Solingen P."/>
            <person name="Specht T."/>
            <person name="Sun J."/>
            <person name="Taheri-Talesh N."/>
            <person name="Takeshita N."/>
            <person name="Ussery D."/>
            <person name="vanKuyk P.A."/>
            <person name="Visser H."/>
            <person name="van de Vondervoort P.J."/>
            <person name="de Vries R.P."/>
            <person name="Walton J."/>
            <person name="Xiang X."/>
            <person name="Xiong Y."/>
            <person name="Zeng A.P."/>
            <person name="Brandt B.W."/>
            <person name="Cornell M.J."/>
            <person name="van den Hondel C.A."/>
            <person name="Visser J."/>
            <person name="Oliver S.G."/>
            <person name="Turner G."/>
        </authorList>
    </citation>
    <scope>GENOME REANNOTATION</scope>
    <source>
        <strain>FGSC A4 / ATCC 38163 / CBS 112.46 / NRRL 194 / M139</strain>
    </source>
</reference>
<reference key="4">
    <citation type="journal article" date="1986" name="Mol. Gen. Genet.">
        <title>Regulation of gene expression by pH of the growth medium in Aspergillus nidulans.</title>
        <authorList>
            <person name="Caddick M.X."/>
            <person name="Brownlee A.G."/>
            <person name="Arst H.N. Jr."/>
        </authorList>
    </citation>
    <scope>FUNCTION</scope>
</reference>
<reference key="5">
    <citation type="journal article" date="2003" name="Mol. Cell. Biol.">
        <title>YPXL/I is a protein interaction motif recognized by Aspergillus PalA and its human homologue, AIP1/Alix.</title>
        <authorList>
            <person name="Vincent O."/>
            <person name="Rainbow L."/>
            <person name="Tilburn J."/>
            <person name="Arst H.N. Jr."/>
            <person name="Penalva M.A."/>
        </authorList>
    </citation>
    <scope>INTERACTION WITH PACC AND VPS32</scope>
</reference>
<dbReference type="EMBL" id="Z83333">
    <property type="protein sequence ID" value="CAB05920.3"/>
    <property type="molecule type" value="Genomic_DNA"/>
</dbReference>
<dbReference type="EMBL" id="AACD01000075">
    <property type="protein sequence ID" value="EAA60512.1"/>
    <property type="molecule type" value="Genomic_DNA"/>
</dbReference>
<dbReference type="EMBL" id="BN001303">
    <property type="protein sequence ID" value="CBF77701.1"/>
    <property type="molecule type" value="Genomic_DNA"/>
</dbReference>
<dbReference type="RefSeq" id="XP_661955.1">
    <property type="nucleotide sequence ID" value="XM_656863.1"/>
</dbReference>
<dbReference type="SMR" id="P79020"/>
<dbReference type="ELM" id="P79020"/>
<dbReference type="FunCoup" id="P79020">
    <property type="interactions" value="1159"/>
</dbReference>
<dbReference type="STRING" id="227321.P79020"/>
<dbReference type="EnsemblFungi" id="CBF77701">
    <property type="protein sequence ID" value="CBF77701"/>
    <property type="gene ID" value="ANIA_04351"/>
</dbReference>
<dbReference type="KEGG" id="ani:ANIA_04351"/>
<dbReference type="VEuPathDB" id="FungiDB:AN4351"/>
<dbReference type="eggNOG" id="KOG2220">
    <property type="taxonomic scope" value="Eukaryota"/>
</dbReference>
<dbReference type="HOGENOM" id="CLU_007181_0_0_1"/>
<dbReference type="InParanoid" id="P79020"/>
<dbReference type="OMA" id="VSHAEEM"/>
<dbReference type="OrthoDB" id="64867at2759"/>
<dbReference type="Proteomes" id="UP000000560">
    <property type="component" value="Chromosome III"/>
</dbReference>
<dbReference type="GO" id="GO:0005768">
    <property type="term" value="C:endosome"/>
    <property type="evidence" value="ECO:0000318"/>
    <property type="project" value="GO_Central"/>
</dbReference>
<dbReference type="GO" id="GO:0000815">
    <property type="term" value="C:ESCRT III complex"/>
    <property type="evidence" value="ECO:0000315"/>
    <property type="project" value="AspGD"/>
</dbReference>
<dbReference type="GO" id="GO:0071467">
    <property type="term" value="P:cellular response to pH"/>
    <property type="evidence" value="ECO:0000315"/>
    <property type="project" value="AspGD"/>
</dbReference>
<dbReference type="GO" id="GO:0042318">
    <property type="term" value="P:penicillin biosynthetic process"/>
    <property type="evidence" value="ECO:0000315"/>
    <property type="project" value="AspGD"/>
</dbReference>
<dbReference type="GO" id="GO:1900198">
    <property type="term" value="P:positive regulation of penicillin biosynthetic process"/>
    <property type="evidence" value="ECO:0000315"/>
    <property type="project" value="AspGD"/>
</dbReference>
<dbReference type="GO" id="GO:1900376">
    <property type="term" value="P:regulation of secondary metabolite biosynthetic process"/>
    <property type="evidence" value="ECO:0000315"/>
    <property type="project" value="AspGD"/>
</dbReference>
<dbReference type="CDD" id="cd09241">
    <property type="entry name" value="BRO1_ScRim20-like"/>
    <property type="match status" value="1"/>
</dbReference>
<dbReference type="CDD" id="cd09236">
    <property type="entry name" value="V_AnPalA_UmRIM20_like"/>
    <property type="match status" value="1"/>
</dbReference>
<dbReference type="FunFam" id="1.25.40.280:FF:000011">
    <property type="entry name" value="pH-response regulator protein palA"/>
    <property type="match status" value="1"/>
</dbReference>
<dbReference type="Gene3D" id="1.20.120.560">
    <property type="entry name" value="alix/aip1 in complex with the ypdl late domain"/>
    <property type="match status" value="1"/>
</dbReference>
<dbReference type="Gene3D" id="1.20.140.50">
    <property type="entry name" value="alix/aip1 like domains"/>
    <property type="match status" value="1"/>
</dbReference>
<dbReference type="Gene3D" id="1.25.40.280">
    <property type="entry name" value="alix/aip1 like domains"/>
    <property type="match status" value="1"/>
</dbReference>
<dbReference type="InterPro" id="IPR025304">
    <property type="entry name" value="ALIX_V_dom"/>
</dbReference>
<dbReference type="InterPro" id="IPR004328">
    <property type="entry name" value="BRO1_dom"/>
</dbReference>
<dbReference type="InterPro" id="IPR038499">
    <property type="entry name" value="BRO1_sf"/>
</dbReference>
<dbReference type="PANTHER" id="PTHR23030">
    <property type="entry name" value="PCD6 INTERACTING PROTEIN-RELATED"/>
    <property type="match status" value="1"/>
</dbReference>
<dbReference type="PANTHER" id="PTHR23030:SF39">
    <property type="entry name" value="PROGRAMMED CELL DEATH 6-INTERACTING PROTEIN"/>
    <property type="match status" value="1"/>
</dbReference>
<dbReference type="Pfam" id="PF13949">
    <property type="entry name" value="ALIX_LYPXL_bnd"/>
    <property type="match status" value="1"/>
</dbReference>
<dbReference type="Pfam" id="PF03097">
    <property type="entry name" value="BRO1"/>
    <property type="match status" value="1"/>
</dbReference>
<dbReference type="SMART" id="SM01041">
    <property type="entry name" value="BRO1"/>
    <property type="match status" value="1"/>
</dbReference>
<dbReference type="PROSITE" id="PS51180">
    <property type="entry name" value="BRO1"/>
    <property type="match status" value="1"/>
</dbReference>
<evidence type="ECO:0000250" key="1"/>
<evidence type="ECO:0000255" key="2"/>
<evidence type="ECO:0000255" key="3">
    <source>
        <dbReference type="PROSITE-ProRule" id="PRU00526"/>
    </source>
</evidence>
<evidence type="ECO:0000256" key="4">
    <source>
        <dbReference type="SAM" id="MobiDB-lite"/>
    </source>
</evidence>
<evidence type="ECO:0000269" key="5">
    <source>
    </source>
</evidence>
<evidence type="ECO:0000269" key="6">
    <source>
    </source>
</evidence>
<evidence type="ECO:0000305" key="7"/>
<comment type="function">
    <text evidence="1 6">Required for the proteolytic cleavage of the transcription factor pacC in response to alkaline ambient pH. May act as a scaffold protein that recruits the calpain-like protease palB via vps32 to its substrate pacC (By similarity).</text>
</comment>
<comment type="subunit">
    <text evidence="5">Interacts with pacC by binding to its two YPX[LI] motifs.</text>
</comment>
<comment type="similarity">
    <text evidence="7">Belongs to the palA/RIM20 family.</text>
</comment>
<organism>
    <name type="scientific">Emericella nidulans (strain FGSC A4 / ATCC 38163 / CBS 112.46 / NRRL 194 / M139)</name>
    <name type="common">Aspergillus nidulans</name>
    <dbReference type="NCBI Taxonomy" id="227321"/>
    <lineage>
        <taxon>Eukaryota</taxon>
        <taxon>Fungi</taxon>
        <taxon>Dikarya</taxon>
        <taxon>Ascomycota</taxon>
        <taxon>Pezizomycotina</taxon>
        <taxon>Eurotiomycetes</taxon>
        <taxon>Eurotiomycetidae</taxon>
        <taxon>Eurotiales</taxon>
        <taxon>Aspergillaceae</taxon>
        <taxon>Aspergillus</taxon>
        <taxon>Aspergillus subgen. Nidulantes</taxon>
    </lineage>
</organism>
<feature type="chain" id="PRO_0000218879" description="pH-response regulator protein palA/RIM20">
    <location>
        <begin position="1"/>
        <end position="847"/>
    </location>
</feature>
<feature type="domain" description="BRO1" evidence="3">
    <location>
        <begin position="4"/>
        <end position="397"/>
    </location>
</feature>
<feature type="region of interest" description="Disordered" evidence="4">
    <location>
        <begin position="763"/>
        <end position="847"/>
    </location>
</feature>
<feature type="coiled-coil region" evidence="2">
    <location>
        <begin position="256"/>
        <end position="312"/>
    </location>
</feature>
<feature type="compositionally biased region" description="Pro residues" evidence="4">
    <location>
        <begin position="772"/>
        <end position="795"/>
    </location>
</feature>
<feature type="compositionally biased region" description="Low complexity" evidence="4">
    <location>
        <begin position="796"/>
        <end position="806"/>
    </location>
</feature>
<feature type="compositionally biased region" description="Polar residues" evidence="4">
    <location>
        <begin position="829"/>
        <end position="839"/>
    </location>
</feature>
<proteinExistence type="evidence at protein level"/>
<gene>
    <name type="primary">palA</name>
    <name type="ORF">AN4351</name>
</gene>
<name>PALA_EMENI</name>